<protein>
    <recommendedName>
        <fullName>Fibroblast growth factor 9</fullName>
        <shortName>FGF-9</shortName>
    </recommendedName>
    <alternativeName>
        <fullName>Glia-activating factor</fullName>
        <shortName>GAF</shortName>
    </alternativeName>
    <alternativeName>
        <fullName>Heparin-binding growth factor 9</fullName>
        <shortName>HBGF-9</shortName>
    </alternativeName>
</protein>
<keyword id="KW-0002">3D-structure</keyword>
<keyword id="KW-0209">Deafness</keyword>
<keyword id="KW-0217">Developmental protein</keyword>
<keyword id="KW-0221">Differentiation</keyword>
<keyword id="KW-0903">Direct protein sequencing</keyword>
<keyword id="KW-0225">Disease variant</keyword>
<keyword id="KW-0325">Glycoprotein</keyword>
<keyword id="KW-0339">Growth factor</keyword>
<keyword id="KW-0358">Heparin-binding</keyword>
<keyword id="KW-0497">Mitogen</keyword>
<keyword id="KW-1267">Proteomics identification</keyword>
<keyword id="KW-1185">Reference proteome</keyword>
<keyword id="KW-0964">Secreted</keyword>
<comment type="function">
    <text evidence="3 6">Plays an important role in the regulation of embryonic development, cell proliferation, cell differentiation and cell migration. May have a role in glial cell growth and differentiation during development, gliosis during repair and regeneration of brain tissue after damage, differentiation and survival of neuronal cells, and growth stimulation of glial tumors.</text>
</comment>
<comment type="subunit">
    <text evidence="1 2 3 6">Monomer. Homodimer. Interacts with FGFR1, FGFR2, FGFR3 and FGFR4. Affinity between fibroblast growth factors (FGFs) and their receptors is increased by heparan sulfate glycosaminoglycans that function as coreceptors.</text>
</comment>
<comment type="subcellular location">
    <subcellularLocation>
        <location>Secreted</location>
    </subcellularLocation>
</comment>
<comment type="tissue specificity">
    <text>Glial cells.</text>
</comment>
<comment type="PTM">
    <text>Three molecular species were found (30 kDa, 29 kDa and 25 kDa), cleaved at Leu-4, Val-13 and Ser-34 respectively. The smaller ones might be products of proteolytic digestion. Furthermore, there may be a functional signal sequence in the 30 kDa species which is uncleavable in the secretion step.</text>
</comment>
<comment type="PTM">
    <text>N-glycosylated.</text>
</comment>
<comment type="disease" evidence="4">
    <disease id="DI-02564">
        <name>Multiple synostoses syndrome 3</name>
        <acronym>SYNS3</acronym>
        <description>A bone disease characterized by multiple progressive joint fusions that commonly involve proximal interphalangeal, tarsal-carpal, humeroradial and cervical spine joints. Additional features can include progressive conductive deafness and facial dysmorphism.</description>
        <dbReference type="MIM" id="612961"/>
    </disease>
    <text>The disease is caused by variants affecting the gene represented in this entry.</text>
</comment>
<comment type="miscellaneous">
    <text>Biochemical analysis of the Asn-99 mutation reveals a significantly impaired FGF signaling, as evidenced by diminished activity of the MAPK1/MAPK2 pathway and decreases CTNNB1 and MYC expression when compared with wild-type protein. Binding of mutant protein to the receptor FGFR3 is severely impaired, although homodimerization of mutant to itself or wild-type is not detectably affected, providing a basis for the observed defective FGF9 signaling.</text>
</comment>
<comment type="similarity">
    <text evidence="8">Belongs to the heparin-binding growth factors family.</text>
</comment>
<organism>
    <name type="scientific">Homo sapiens</name>
    <name type="common">Human</name>
    <dbReference type="NCBI Taxonomy" id="9606"/>
    <lineage>
        <taxon>Eukaryota</taxon>
        <taxon>Metazoa</taxon>
        <taxon>Chordata</taxon>
        <taxon>Craniata</taxon>
        <taxon>Vertebrata</taxon>
        <taxon>Euteleostomi</taxon>
        <taxon>Mammalia</taxon>
        <taxon>Eutheria</taxon>
        <taxon>Euarchontoglires</taxon>
        <taxon>Primates</taxon>
        <taxon>Haplorrhini</taxon>
        <taxon>Catarrhini</taxon>
        <taxon>Hominidae</taxon>
        <taxon>Homo</taxon>
    </lineage>
</organism>
<evidence type="ECO:0000269" key="1">
    <source>
    </source>
</evidence>
<evidence type="ECO:0000269" key="2">
    <source>
    </source>
</evidence>
<evidence type="ECO:0000269" key="3">
    <source>
    </source>
</evidence>
<evidence type="ECO:0000269" key="4">
    <source>
    </source>
</evidence>
<evidence type="ECO:0000269" key="5">
    <source>
    </source>
</evidence>
<evidence type="ECO:0000269" key="6">
    <source>
    </source>
</evidence>
<evidence type="ECO:0000269" key="7">
    <source ref="2"/>
</evidence>
<evidence type="ECO:0000305" key="8"/>
<evidence type="ECO:0007829" key="9">
    <source>
        <dbReference type="PDB" id="1IHK"/>
    </source>
</evidence>
<evidence type="ECO:0007829" key="10">
    <source>
        <dbReference type="PDB" id="5W59"/>
    </source>
</evidence>
<dbReference type="EMBL" id="D14838">
    <property type="protein sequence ID" value="BAA03572.1"/>
    <property type="molecule type" value="mRNA"/>
</dbReference>
<dbReference type="EMBL" id="AY682094">
    <property type="protein sequence ID" value="AAT74624.1"/>
    <property type="molecule type" value="Genomic_DNA"/>
</dbReference>
<dbReference type="EMBL" id="AK290792">
    <property type="protein sequence ID" value="BAF83481.1"/>
    <property type="molecule type" value="mRNA"/>
</dbReference>
<dbReference type="EMBL" id="AL139378">
    <property type="status" value="NOT_ANNOTATED_CDS"/>
    <property type="molecule type" value="Genomic_DNA"/>
</dbReference>
<dbReference type="EMBL" id="CH471075">
    <property type="protein sequence ID" value="EAX08316.1"/>
    <property type="molecule type" value="Genomic_DNA"/>
</dbReference>
<dbReference type="EMBL" id="BC069692">
    <property type="protein sequence ID" value="AAH69692.1"/>
    <property type="molecule type" value="mRNA"/>
</dbReference>
<dbReference type="EMBL" id="BC103978">
    <property type="protein sequence ID" value="AAI03979.1"/>
    <property type="molecule type" value="mRNA"/>
</dbReference>
<dbReference type="EMBL" id="BC103979">
    <property type="protein sequence ID" value="AAI03980.1"/>
    <property type="molecule type" value="mRNA"/>
</dbReference>
<dbReference type="CCDS" id="CCDS9298.1"/>
<dbReference type="PIR" id="A48137">
    <property type="entry name" value="A48137"/>
</dbReference>
<dbReference type="RefSeq" id="NP_002001.1">
    <property type="nucleotide sequence ID" value="NM_002010.3"/>
</dbReference>
<dbReference type="PDB" id="1G82">
    <property type="method" value="X-ray"/>
    <property type="resolution" value="2.60 A"/>
    <property type="chains" value="A/B/C/D=49-208"/>
</dbReference>
<dbReference type="PDB" id="1IHK">
    <property type="method" value="X-ray"/>
    <property type="resolution" value="2.20 A"/>
    <property type="chains" value="A=35-208"/>
</dbReference>
<dbReference type="PDB" id="5W59">
    <property type="method" value="X-ray"/>
    <property type="resolution" value="2.50 A"/>
    <property type="chains" value="A=35-208"/>
</dbReference>
<dbReference type="PDBsum" id="1G82"/>
<dbReference type="PDBsum" id="1IHK"/>
<dbReference type="PDBsum" id="5W59"/>
<dbReference type="SMR" id="P31371"/>
<dbReference type="BioGRID" id="108545">
    <property type="interactions" value="14"/>
</dbReference>
<dbReference type="DIP" id="DIP-6036N"/>
<dbReference type="FunCoup" id="P31371">
    <property type="interactions" value="931"/>
</dbReference>
<dbReference type="IntAct" id="P31371">
    <property type="interactions" value="12"/>
</dbReference>
<dbReference type="STRING" id="9606.ENSP00000371790"/>
<dbReference type="GlyCosmos" id="P31371">
    <property type="glycosylation" value="1 site, No reported glycans"/>
</dbReference>
<dbReference type="GlyGen" id="P31371">
    <property type="glycosylation" value="1 site"/>
</dbReference>
<dbReference type="iPTMnet" id="P31371"/>
<dbReference type="PhosphoSitePlus" id="P31371"/>
<dbReference type="BioMuta" id="FGF9"/>
<dbReference type="DMDM" id="544290"/>
<dbReference type="MassIVE" id="P31371"/>
<dbReference type="PaxDb" id="9606-ENSP00000371790"/>
<dbReference type="PeptideAtlas" id="P31371"/>
<dbReference type="Antibodypedia" id="3827">
    <property type="antibodies" value="403 antibodies from 35 providers"/>
</dbReference>
<dbReference type="DNASU" id="2254"/>
<dbReference type="Ensembl" id="ENST00000382353.6">
    <property type="protein sequence ID" value="ENSP00000371790.5"/>
    <property type="gene ID" value="ENSG00000102678.7"/>
</dbReference>
<dbReference type="GeneID" id="2254"/>
<dbReference type="KEGG" id="hsa:2254"/>
<dbReference type="MANE-Select" id="ENST00000382353.6">
    <property type="protein sequence ID" value="ENSP00000371790.5"/>
    <property type="RefSeq nucleotide sequence ID" value="NM_002010.3"/>
    <property type="RefSeq protein sequence ID" value="NP_002001.1"/>
</dbReference>
<dbReference type="UCSC" id="uc001uog.3">
    <property type="organism name" value="human"/>
</dbReference>
<dbReference type="AGR" id="HGNC:3687"/>
<dbReference type="CTD" id="2254"/>
<dbReference type="DisGeNET" id="2254"/>
<dbReference type="GeneCards" id="FGF9"/>
<dbReference type="HGNC" id="HGNC:3687">
    <property type="gene designation" value="FGF9"/>
</dbReference>
<dbReference type="HPA" id="ENSG00000102678">
    <property type="expression patterns" value="Tissue enhanced (brain, kidney, retina)"/>
</dbReference>
<dbReference type="MalaCards" id="FGF9"/>
<dbReference type="MIM" id="600921">
    <property type="type" value="gene"/>
</dbReference>
<dbReference type="MIM" id="612961">
    <property type="type" value="phenotype"/>
</dbReference>
<dbReference type="neXtProt" id="NX_P31371"/>
<dbReference type="OpenTargets" id="ENSG00000102678"/>
<dbReference type="Orphanet" id="3237">
    <property type="disease" value="Multiple synostoses syndrome"/>
</dbReference>
<dbReference type="PharmGKB" id="PA28126"/>
<dbReference type="VEuPathDB" id="HostDB:ENSG00000102678"/>
<dbReference type="eggNOG" id="KOG3885">
    <property type="taxonomic scope" value="Eukaryota"/>
</dbReference>
<dbReference type="GeneTree" id="ENSGT00940000160956"/>
<dbReference type="HOGENOM" id="CLU_081609_0_0_1"/>
<dbReference type="InParanoid" id="P31371"/>
<dbReference type="OMA" id="FFWIYLS"/>
<dbReference type="OrthoDB" id="6158176at2759"/>
<dbReference type="PAN-GO" id="P31371">
    <property type="GO annotations" value="12 GO annotations based on evolutionary models"/>
</dbReference>
<dbReference type="PhylomeDB" id="P31371"/>
<dbReference type="TreeFam" id="TF317805"/>
<dbReference type="PathwayCommons" id="P31371"/>
<dbReference type="Reactome" id="R-HSA-109704">
    <property type="pathway name" value="PI3K Cascade"/>
</dbReference>
<dbReference type="Reactome" id="R-HSA-1257604">
    <property type="pathway name" value="PIP3 activates AKT signaling"/>
</dbReference>
<dbReference type="Reactome" id="R-HSA-1839122">
    <property type="pathway name" value="Signaling by activated point mutants of FGFR1"/>
</dbReference>
<dbReference type="Reactome" id="R-HSA-1839130">
    <property type="pathway name" value="Signaling by activated point mutants of FGFR3"/>
</dbReference>
<dbReference type="Reactome" id="R-HSA-190322">
    <property type="pathway name" value="FGFR4 ligand binding and activation"/>
</dbReference>
<dbReference type="Reactome" id="R-HSA-190371">
    <property type="pathway name" value="FGFR3b ligand binding and activation"/>
</dbReference>
<dbReference type="Reactome" id="R-HSA-190372">
    <property type="pathway name" value="FGFR3c ligand binding and activation"/>
</dbReference>
<dbReference type="Reactome" id="R-HSA-190373">
    <property type="pathway name" value="FGFR1c ligand binding and activation"/>
</dbReference>
<dbReference type="Reactome" id="R-HSA-190375">
    <property type="pathway name" value="FGFR2c ligand binding and activation"/>
</dbReference>
<dbReference type="Reactome" id="R-HSA-2033519">
    <property type="pathway name" value="Activated point mutants of FGFR2"/>
</dbReference>
<dbReference type="Reactome" id="R-HSA-2219530">
    <property type="pathway name" value="Constitutive Signaling by Aberrant PI3K in Cancer"/>
</dbReference>
<dbReference type="Reactome" id="R-HSA-5654219">
    <property type="pathway name" value="Phospholipase C-mediated cascade: FGFR1"/>
</dbReference>
<dbReference type="Reactome" id="R-HSA-5654221">
    <property type="pathway name" value="Phospholipase C-mediated cascade, FGFR2"/>
</dbReference>
<dbReference type="Reactome" id="R-HSA-5654227">
    <property type="pathway name" value="Phospholipase C-mediated cascade, FGFR3"/>
</dbReference>
<dbReference type="Reactome" id="R-HSA-5654228">
    <property type="pathway name" value="Phospholipase C-mediated cascade, FGFR4"/>
</dbReference>
<dbReference type="Reactome" id="R-HSA-5654687">
    <property type="pathway name" value="Downstream signaling of activated FGFR1"/>
</dbReference>
<dbReference type="Reactome" id="R-HSA-5654688">
    <property type="pathway name" value="SHC-mediated cascade:FGFR1"/>
</dbReference>
<dbReference type="Reactome" id="R-HSA-5654689">
    <property type="pathway name" value="PI-3K cascade:FGFR1"/>
</dbReference>
<dbReference type="Reactome" id="R-HSA-5654693">
    <property type="pathway name" value="FRS-mediated FGFR1 signaling"/>
</dbReference>
<dbReference type="Reactome" id="R-HSA-5654695">
    <property type="pathway name" value="PI-3K cascade:FGFR2"/>
</dbReference>
<dbReference type="Reactome" id="R-HSA-5654699">
    <property type="pathway name" value="SHC-mediated cascade:FGFR2"/>
</dbReference>
<dbReference type="Reactome" id="R-HSA-5654700">
    <property type="pathway name" value="FRS-mediated FGFR2 signaling"/>
</dbReference>
<dbReference type="Reactome" id="R-HSA-5654704">
    <property type="pathway name" value="SHC-mediated cascade:FGFR3"/>
</dbReference>
<dbReference type="Reactome" id="R-HSA-5654706">
    <property type="pathway name" value="FRS-mediated FGFR3 signaling"/>
</dbReference>
<dbReference type="Reactome" id="R-HSA-5654710">
    <property type="pathway name" value="PI-3K cascade:FGFR3"/>
</dbReference>
<dbReference type="Reactome" id="R-HSA-5654712">
    <property type="pathway name" value="FRS-mediated FGFR4 signaling"/>
</dbReference>
<dbReference type="Reactome" id="R-HSA-5654719">
    <property type="pathway name" value="SHC-mediated cascade:FGFR4"/>
</dbReference>
<dbReference type="Reactome" id="R-HSA-5654720">
    <property type="pathway name" value="PI-3K cascade:FGFR4"/>
</dbReference>
<dbReference type="Reactome" id="R-HSA-5654726">
    <property type="pathway name" value="Negative regulation of FGFR1 signaling"/>
</dbReference>
<dbReference type="Reactome" id="R-HSA-5654727">
    <property type="pathway name" value="Negative regulation of FGFR2 signaling"/>
</dbReference>
<dbReference type="Reactome" id="R-HSA-5654732">
    <property type="pathway name" value="Negative regulation of FGFR3 signaling"/>
</dbReference>
<dbReference type="Reactome" id="R-HSA-5654733">
    <property type="pathway name" value="Negative regulation of FGFR4 signaling"/>
</dbReference>
<dbReference type="Reactome" id="R-HSA-5655253">
    <property type="pathway name" value="Signaling by FGFR2 in disease"/>
</dbReference>
<dbReference type="Reactome" id="R-HSA-5655302">
    <property type="pathway name" value="Signaling by FGFR1 in disease"/>
</dbReference>
<dbReference type="Reactome" id="R-HSA-5655332">
    <property type="pathway name" value="Signaling by FGFR3 in disease"/>
</dbReference>
<dbReference type="Reactome" id="R-HSA-5673001">
    <property type="pathway name" value="RAF/MAP kinase cascade"/>
</dbReference>
<dbReference type="Reactome" id="R-HSA-6811558">
    <property type="pathway name" value="PI5P, PP2A and IER3 Regulate PI3K/AKT Signaling"/>
</dbReference>
<dbReference type="Reactome" id="R-HSA-9690406">
    <property type="pathway name" value="Transcriptional regulation of testis differentiation"/>
</dbReference>
<dbReference type="SignaLink" id="P31371"/>
<dbReference type="SIGNOR" id="P31371"/>
<dbReference type="BioGRID-ORCS" id="2254">
    <property type="hits" value="6 hits in 1149 CRISPR screens"/>
</dbReference>
<dbReference type="EvolutionaryTrace" id="P31371"/>
<dbReference type="GeneWiki" id="FGF9"/>
<dbReference type="GenomeRNAi" id="2254"/>
<dbReference type="Pharos" id="P31371">
    <property type="development level" value="Tbio"/>
</dbReference>
<dbReference type="PRO" id="PR:P31371"/>
<dbReference type="Proteomes" id="UP000005640">
    <property type="component" value="Chromosome 13"/>
</dbReference>
<dbReference type="RNAct" id="P31371">
    <property type="molecule type" value="protein"/>
</dbReference>
<dbReference type="Bgee" id="ENSG00000102678">
    <property type="expression patterns" value="Expressed in secondary oocyte and 165 other cell types or tissues"/>
</dbReference>
<dbReference type="GO" id="GO:0005737">
    <property type="term" value="C:cytoplasm"/>
    <property type="evidence" value="ECO:0000318"/>
    <property type="project" value="GO_Central"/>
</dbReference>
<dbReference type="GO" id="GO:0005576">
    <property type="term" value="C:extracellular region"/>
    <property type="evidence" value="ECO:0000304"/>
    <property type="project" value="Reactome"/>
</dbReference>
<dbReference type="GO" id="GO:0005615">
    <property type="term" value="C:extracellular space"/>
    <property type="evidence" value="ECO:0000314"/>
    <property type="project" value="MGI"/>
</dbReference>
<dbReference type="GO" id="GO:0005104">
    <property type="term" value="F:fibroblast growth factor receptor binding"/>
    <property type="evidence" value="ECO:0000318"/>
    <property type="project" value="GO_Central"/>
</dbReference>
<dbReference type="GO" id="GO:0008083">
    <property type="term" value="F:growth factor activity"/>
    <property type="evidence" value="ECO:0000318"/>
    <property type="project" value="GO_Central"/>
</dbReference>
<dbReference type="GO" id="GO:0008201">
    <property type="term" value="F:heparin binding"/>
    <property type="evidence" value="ECO:0007669"/>
    <property type="project" value="UniProtKB-KW"/>
</dbReference>
<dbReference type="GO" id="GO:0032924">
    <property type="term" value="P:activin receptor signaling pathway"/>
    <property type="evidence" value="ECO:0007669"/>
    <property type="project" value="Ensembl"/>
</dbReference>
<dbReference type="GO" id="GO:0001525">
    <property type="term" value="P:angiogenesis"/>
    <property type="evidence" value="ECO:0007669"/>
    <property type="project" value="Ensembl"/>
</dbReference>
<dbReference type="GO" id="GO:0060070">
    <property type="term" value="P:canonical Wnt signaling pathway"/>
    <property type="evidence" value="ECO:0007669"/>
    <property type="project" value="Ensembl"/>
</dbReference>
<dbReference type="GO" id="GO:0060038">
    <property type="term" value="P:cardiac muscle cell proliferation"/>
    <property type="evidence" value="ECO:0007669"/>
    <property type="project" value="Ensembl"/>
</dbReference>
<dbReference type="GO" id="GO:0007267">
    <property type="term" value="P:cell-cell signaling"/>
    <property type="evidence" value="ECO:0000304"/>
    <property type="project" value="ProtInc"/>
</dbReference>
<dbReference type="GO" id="GO:0002062">
    <property type="term" value="P:chondrocyte differentiation"/>
    <property type="evidence" value="ECO:0007669"/>
    <property type="project" value="Ensembl"/>
</dbReference>
<dbReference type="GO" id="GO:0048566">
    <property type="term" value="P:embryonic digestive tract development"/>
    <property type="evidence" value="ECO:0007669"/>
    <property type="project" value="Ensembl"/>
</dbReference>
<dbReference type="GO" id="GO:0030326">
    <property type="term" value="P:embryonic limb morphogenesis"/>
    <property type="evidence" value="ECO:0007669"/>
    <property type="project" value="Ensembl"/>
</dbReference>
<dbReference type="GO" id="GO:0048706">
    <property type="term" value="P:embryonic skeletal system development"/>
    <property type="evidence" value="ECO:0007669"/>
    <property type="project" value="Ensembl"/>
</dbReference>
<dbReference type="GO" id="GO:0001654">
    <property type="term" value="P:eye development"/>
    <property type="evidence" value="ECO:0007669"/>
    <property type="project" value="Ensembl"/>
</dbReference>
<dbReference type="GO" id="GO:0008543">
    <property type="term" value="P:fibroblast growth factor receptor signaling pathway"/>
    <property type="evidence" value="ECO:0000316"/>
    <property type="project" value="MGI"/>
</dbReference>
<dbReference type="GO" id="GO:0042472">
    <property type="term" value="P:inner ear morphogenesis"/>
    <property type="evidence" value="ECO:0007669"/>
    <property type="project" value="Ensembl"/>
</dbReference>
<dbReference type="GO" id="GO:0060484">
    <property type="term" value="P:lung-associated mesenchyme development"/>
    <property type="evidence" value="ECO:0007669"/>
    <property type="project" value="Ensembl"/>
</dbReference>
<dbReference type="GO" id="GO:0008584">
    <property type="term" value="P:male gonad development"/>
    <property type="evidence" value="ECO:0000270"/>
    <property type="project" value="UniProtKB"/>
</dbReference>
<dbReference type="GO" id="GO:0030238">
    <property type="term" value="P:male sex determination"/>
    <property type="evidence" value="ECO:0007669"/>
    <property type="project" value="Ensembl"/>
</dbReference>
<dbReference type="GO" id="GO:0010463">
    <property type="term" value="P:mesenchymal cell proliferation"/>
    <property type="evidence" value="ECO:0007669"/>
    <property type="project" value="Ensembl"/>
</dbReference>
<dbReference type="GO" id="GO:0000122">
    <property type="term" value="P:negative regulation of transcription by RNA polymerase II"/>
    <property type="evidence" value="ECO:0007669"/>
    <property type="project" value="Ensembl"/>
</dbReference>
<dbReference type="GO" id="GO:1905931">
    <property type="term" value="P:negative regulation of vascular associated smooth muscle cell differentiation involved in phenotypic switching"/>
    <property type="evidence" value="ECO:0000250"/>
    <property type="project" value="BHF-UCL"/>
</dbReference>
<dbReference type="GO" id="GO:0030178">
    <property type="term" value="P:negative regulation of Wnt signaling pathway"/>
    <property type="evidence" value="ECO:0007669"/>
    <property type="project" value="Ensembl"/>
</dbReference>
<dbReference type="GO" id="GO:0022008">
    <property type="term" value="P:neurogenesis"/>
    <property type="evidence" value="ECO:0000318"/>
    <property type="project" value="GO_Central"/>
</dbReference>
<dbReference type="GO" id="GO:0001649">
    <property type="term" value="P:osteoblast differentiation"/>
    <property type="evidence" value="ECO:0007669"/>
    <property type="project" value="Ensembl"/>
</dbReference>
<dbReference type="GO" id="GO:0032927">
    <property type="term" value="P:positive regulation of activin receptor signaling pathway"/>
    <property type="evidence" value="ECO:0007669"/>
    <property type="project" value="Ensembl"/>
</dbReference>
<dbReference type="GO" id="GO:0090263">
    <property type="term" value="P:positive regulation of canonical Wnt signaling pathway"/>
    <property type="evidence" value="ECO:0007669"/>
    <property type="project" value="Ensembl"/>
</dbReference>
<dbReference type="GO" id="GO:0060045">
    <property type="term" value="P:positive regulation of cardiac muscle cell proliferation"/>
    <property type="evidence" value="ECO:0007669"/>
    <property type="project" value="Ensembl"/>
</dbReference>
<dbReference type="GO" id="GO:0051781">
    <property type="term" value="P:positive regulation of cell division"/>
    <property type="evidence" value="ECO:0007669"/>
    <property type="project" value="UniProtKB-KW"/>
</dbReference>
<dbReference type="GO" id="GO:0008284">
    <property type="term" value="P:positive regulation of cell population proliferation"/>
    <property type="evidence" value="ECO:0000314"/>
    <property type="project" value="MGI"/>
</dbReference>
<dbReference type="GO" id="GO:0050679">
    <property type="term" value="P:positive regulation of epithelial cell proliferation"/>
    <property type="evidence" value="ECO:0007669"/>
    <property type="project" value="Ensembl"/>
</dbReference>
<dbReference type="GO" id="GO:0010628">
    <property type="term" value="P:positive regulation of gene expression"/>
    <property type="evidence" value="ECO:0007669"/>
    <property type="project" value="Ensembl"/>
</dbReference>
<dbReference type="GO" id="GO:0043410">
    <property type="term" value="P:positive regulation of MAPK cascade"/>
    <property type="evidence" value="ECO:0000318"/>
    <property type="project" value="GO_Central"/>
</dbReference>
<dbReference type="GO" id="GO:0002053">
    <property type="term" value="P:positive regulation of mesenchymal cell proliferation"/>
    <property type="evidence" value="ECO:0007669"/>
    <property type="project" value="Ensembl"/>
</dbReference>
<dbReference type="GO" id="GO:0045880">
    <property type="term" value="P:positive regulation of smoothened signaling pathway"/>
    <property type="evidence" value="ECO:0007669"/>
    <property type="project" value="Ensembl"/>
</dbReference>
<dbReference type="GO" id="GO:2000648">
    <property type="term" value="P:positive regulation of stem cell proliferation"/>
    <property type="evidence" value="ECO:0007669"/>
    <property type="project" value="Ensembl"/>
</dbReference>
<dbReference type="GO" id="GO:1904754">
    <property type="term" value="P:positive regulation of vascular associated smooth muscle cell migration"/>
    <property type="evidence" value="ECO:0000250"/>
    <property type="project" value="BHF-UCL"/>
</dbReference>
<dbReference type="GO" id="GO:1904707">
    <property type="term" value="P:positive regulation of vascular associated smooth muscle cell proliferation"/>
    <property type="evidence" value="ECO:0000316"/>
    <property type="project" value="BHF-UCL"/>
</dbReference>
<dbReference type="GO" id="GO:0030949">
    <property type="term" value="P:positive regulation of vascular endothelial growth factor receptor signaling pathway"/>
    <property type="evidence" value="ECO:0007669"/>
    <property type="project" value="Ensembl"/>
</dbReference>
<dbReference type="GO" id="GO:0006606">
    <property type="term" value="P:protein import into nucleus"/>
    <property type="evidence" value="ECO:0007669"/>
    <property type="project" value="Ensembl"/>
</dbReference>
<dbReference type="GO" id="GO:0030334">
    <property type="term" value="P:regulation of cell migration"/>
    <property type="evidence" value="ECO:0000318"/>
    <property type="project" value="GO_Central"/>
</dbReference>
<dbReference type="GO" id="GO:0048505">
    <property type="term" value="P:regulation of timing of cell differentiation"/>
    <property type="evidence" value="ECO:0007669"/>
    <property type="project" value="Ensembl"/>
</dbReference>
<dbReference type="GO" id="GO:0060011">
    <property type="term" value="P:Sertoli cell proliferation"/>
    <property type="evidence" value="ECO:0007669"/>
    <property type="project" value="Ensembl"/>
</dbReference>
<dbReference type="GO" id="GO:0007165">
    <property type="term" value="P:signal transduction"/>
    <property type="evidence" value="ECO:0000304"/>
    <property type="project" value="ProtInc"/>
</dbReference>
<dbReference type="GO" id="GO:0007224">
    <property type="term" value="P:smoothened signaling pathway"/>
    <property type="evidence" value="ECO:0007669"/>
    <property type="project" value="Ensembl"/>
</dbReference>
<dbReference type="GO" id="GO:0072089">
    <property type="term" value="P:stem cell proliferation"/>
    <property type="evidence" value="ECO:0007669"/>
    <property type="project" value="Ensembl"/>
</dbReference>
<dbReference type="GO" id="GO:0021762">
    <property type="term" value="P:substantia nigra development"/>
    <property type="evidence" value="ECO:0007007"/>
    <property type="project" value="UniProtKB"/>
</dbReference>
<dbReference type="GO" id="GO:0048010">
    <property type="term" value="P:vascular endothelial growth factor receptor signaling pathway"/>
    <property type="evidence" value="ECO:0007669"/>
    <property type="project" value="Ensembl"/>
</dbReference>
<dbReference type="CDD" id="cd23325">
    <property type="entry name" value="beta-trefoil_FGF9"/>
    <property type="match status" value="1"/>
</dbReference>
<dbReference type="FunFam" id="2.80.10.50:FF:000004">
    <property type="entry name" value="Fibroblast growth factor"/>
    <property type="match status" value="1"/>
</dbReference>
<dbReference type="Gene3D" id="2.80.10.50">
    <property type="match status" value="1"/>
</dbReference>
<dbReference type="InterPro" id="IPR002209">
    <property type="entry name" value="Fibroblast_GF_fam"/>
</dbReference>
<dbReference type="InterPro" id="IPR008996">
    <property type="entry name" value="IL1/FGF"/>
</dbReference>
<dbReference type="PANTHER" id="PTHR11486">
    <property type="entry name" value="FIBROBLAST GROWTH FACTOR"/>
    <property type="match status" value="1"/>
</dbReference>
<dbReference type="Pfam" id="PF00167">
    <property type="entry name" value="FGF"/>
    <property type="match status" value="1"/>
</dbReference>
<dbReference type="PRINTS" id="PR00263">
    <property type="entry name" value="HBGFFGF"/>
</dbReference>
<dbReference type="PRINTS" id="PR00262">
    <property type="entry name" value="IL1HBGF"/>
</dbReference>
<dbReference type="SMART" id="SM00442">
    <property type="entry name" value="FGF"/>
    <property type="match status" value="1"/>
</dbReference>
<dbReference type="SUPFAM" id="SSF50353">
    <property type="entry name" value="Cytokine"/>
    <property type="match status" value="1"/>
</dbReference>
<dbReference type="PROSITE" id="PS00247">
    <property type="entry name" value="HBGF_FGF"/>
    <property type="match status" value="1"/>
</dbReference>
<proteinExistence type="evidence at protein level"/>
<feature type="propeptide" id="PRO_0000008973" evidence="5">
    <location>
        <begin position="1"/>
        <end position="3"/>
    </location>
</feature>
<feature type="chain" id="PRO_0000008974" description="Fibroblast growth factor 9">
    <location>
        <begin position="4"/>
        <end position="208"/>
    </location>
</feature>
<feature type="glycosylation site" description="N-linked (GlcNAc...) asparagine">
    <location>
        <position position="79"/>
    </location>
</feature>
<feature type="sequence variant" id="VAR_020944" description="In dbSNP:rs12427696." evidence="7">
    <original>I</original>
    <variation>V</variation>
    <location>
        <position position="94"/>
    </location>
</feature>
<feature type="sequence variant" id="VAR_063254" description="In SYNS3; expressed and secreted as efficiently as wild-type; however it induces compromised chondrocyte proliferation and differentiation accompanied by enhanced osteogenic differentiation and matrix mineralization of bone marrow-derived mesenchymal stem cells; dbSNP:rs121918322." evidence="4">
    <original>S</original>
    <variation>N</variation>
    <location>
        <position position="99"/>
    </location>
</feature>
<feature type="sequence conflict" description="In Ref. 7; AA sequence." evidence="8" ref="7">
    <original>VLP</original>
    <variation>SLL</variation>
    <location>
        <begin position="24"/>
        <end position="26"/>
    </location>
</feature>
<feature type="sequence conflict" description="In Ref. 7; AA sequence." evidence="8" ref="7">
    <original>S</original>
    <variation>A</variation>
    <location>
        <position position="34"/>
    </location>
</feature>
<feature type="helix" evidence="9">
    <location>
        <begin position="53"/>
        <end position="60"/>
    </location>
</feature>
<feature type="strand" evidence="9">
    <location>
        <begin position="63"/>
        <end position="68"/>
    </location>
</feature>
<feature type="turn" evidence="10">
    <location>
        <begin position="69"/>
        <end position="71"/>
    </location>
</feature>
<feature type="strand" evidence="9">
    <location>
        <begin position="73"/>
        <end position="76"/>
    </location>
</feature>
<feature type="strand" evidence="9">
    <location>
        <begin position="82"/>
        <end position="87"/>
    </location>
</feature>
<feature type="helix" evidence="9">
    <location>
        <begin position="91"/>
        <end position="93"/>
    </location>
</feature>
<feature type="strand" evidence="9">
    <location>
        <begin position="95"/>
        <end position="101"/>
    </location>
</feature>
<feature type="strand" evidence="9">
    <location>
        <begin position="104"/>
        <end position="109"/>
    </location>
</feature>
<feature type="turn" evidence="9">
    <location>
        <begin position="110"/>
        <end position="112"/>
    </location>
</feature>
<feature type="strand" evidence="9">
    <location>
        <begin position="115"/>
        <end position="118"/>
    </location>
</feature>
<feature type="strand" evidence="9">
    <location>
        <begin position="124"/>
        <end position="129"/>
    </location>
</feature>
<feature type="helix" evidence="9">
    <location>
        <begin position="132"/>
        <end position="134"/>
    </location>
</feature>
<feature type="strand" evidence="9">
    <location>
        <begin position="136"/>
        <end position="142"/>
    </location>
</feature>
<feature type="strand" evidence="9">
    <location>
        <begin position="145"/>
        <end position="154"/>
    </location>
</feature>
<feature type="turn" evidence="9">
    <location>
        <begin position="156"/>
        <end position="158"/>
    </location>
</feature>
<feature type="strand" evidence="9">
    <location>
        <begin position="161"/>
        <end position="163"/>
    </location>
</feature>
<feature type="helix" evidence="9">
    <location>
        <begin position="175"/>
        <end position="177"/>
    </location>
</feature>
<feature type="helix" evidence="9">
    <location>
        <begin position="183"/>
        <end position="185"/>
    </location>
</feature>
<feature type="strand" evidence="9">
    <location>
        <begin position="187"/>
        <end position="190"/>
    </location>
</feature>
<feature type="helix" evidence="9">
    <location>
        <begin position="194"/>
        <end position="196"/>
    </location>
</feature>
<feature type="helix" evidence="9">
    <location>
        <begin position="200"/>
        <end position="203"/>
    </location>
</feature>
<accession>P31371</accession>
<accession>A8K427</accession>
<accession>Q3SY32</accession>
<reference key="1">
    <citation type="journal article" date="1993" name="Mol. Cell. Biol.">
        <title>Molecular cloning of a novel cytokine cDNA encoding the ninth member of the fibroblast growth factor family, which has a unique secretion property.</title>
        <authorList>
            <person name="Miyamoto M."/>
            <person name="Naruo K."/>
            <person name="Seko C."/>
            <person name="Matsumoto S."/>
            <person name="Kondo T."/>
            <person name="Kurokawa T."/>
        </authorList>
    </citation>
    <scope>NUCLEOTIDE SEQUENCE [MRNA]</scope>
    <source>
        <tissue>Foreskin</tissue>
    </source>
</reference>
<reference key="2">
    <citation type="submission" date="2004-07" db="EMBL/GenBank/DDBJ databases">
        <authorList>
            <consortium name="NIEHS SNPs program"/>
        </authorList>
    </citation>
    <scope>NUCLEOTIDE SEQUENCE [GENOMIC DNA]</scope>
    <scope>VARIANT VAL-94</scope>
</reference>
<reference key="3">
    <citation type="journal article" date="2004" name="Nat. Genet.">
        <title>Complete sequencing and characterization of 21,243 full-length human cDNAs.</title>
        <authorList>
            <person name="Ota T."/>
            <person name="Suzuki Y."/>
            <person name="Nishikawa T."/>
            <person name="Otsuki T."/>
            <person name="Sugiyama T."/>
            <person name="Irie R."/>
            <person name="Wakamatsu A."/>
            <person name="Hayashi K."/>
            <person name="Sato H."/>
            <person name="Nagai K."/>
            <person name="Kimura K."/>
            <person name="Makita H."/>
            <person name="Sekine M."/>
            <person name="Obayashi M."/>
            <person name="Nishi T."/>
            <person name="Shibahara T."/>
            <person name="Tanaka T."/>
            <person name="Ishii S."/>
            <person name="Yamamoto J."/>
            <person name="Saito K."/>
            <person name="Kawai Y."/>
            <person name="Isono Y."/>
            <person name="Nakamura Y."/>
            <person name="Nagahari K."/>
            <person name="Murakami K."/>
            <person name="Yasuda T."/>
            <person name="Iwayanagi T."/>
            <person name="Wagatsuma M."/>
            <person name="Shiratori A."/>
            <person name="Sudo H."/>
            <person name="Hosoiri T."/>
            <person name="Kaku Y."/>
            <person name="Kodaira H."/>
            <person name="Kondo H."/>
            <person name="Sugawara M."/>
            <person name="Takahashi M."/>
            <person name="Kanda K."/>
            <person name="Yokoi T."/>
            <person name="Furuya T."/>
            <person name="Kikkawa E."/>
            <person name="Omura Y."/>
            <person name="Abe K."/>
            <person name="Kamihara K."/>
            <person name="Katsuta N."/>
            <person name="Sato K."/>
            <person name="Tanikawa M."/>
            <person name="Yamazaki M."/>
            <person name="Ninomiya K."/>
            <person name="Ishibashi T."/>
            <person name="Yamashita H."/>
            <person name="Murakawa K."/>
            <person name="Fujimori K."/>
            <person name="Tanai H."/>
            <person name="Kimata M."/>
            <person name="Watanabe M."/>
            <person name="Hiraoka S."/>
            <person name="Chiba Y."/>
            <person name="Ishida S."/>
            <person name="Ono Y."/>
            <person name="Takiguchi S."/>
            <person name="Watanabe S."/>
            <person name="Yosida M."/>
            <person name="Hotuta T."/>
            <person name="Kusano J."/>
            <person name="Kanehori K."/>
            <person name="Takahashi-Fujii A."/>
            <person name="Hara H."/>
            <person name="Tanase T.-O."/>
            <person name="Nomura Y."/>
            <person name="Togiya S."/>
            <person name="Komai F."/>
            <person name="Hara R."/>
            <person name="Takeuchi K."/>
            <person name="Arita M."/>
            <person name="Imose N."/>
            <person name="Musashino K."/>
            <person name="Yuuki H."/>
            <person name="Oshima A."/>
            <person name="Sasaki N."/>
            <person name="Aotsuka S."/>
            <person name="Yoshikawa Y."/>
            <person name="Matsunawa H."/>
            <person name="Ichihara T."/>
            <person name="Shiohata N."/>
            <person name="Sano S."/>
            <person name="Moriya S."/>
            <person name="Momiyama H."/>
            <person name="Satoh N."/>
            <person name="Takami S."/>
            <person name="Terashima Y."/>
            <person name="Suzuki O."/>
            <person name="Nakagawa S."/>
            <person name="Senoh A."/>
            <person name="Mizoguchi H."/>
            <person name="Goto Y."/>
            <person name="Shimizu F."/>
            <person name="Wakebe H."/>
            <person name="Hishigaki H."/>
            <person name="Watanabe T."/>
            <person name="Sugiyama A."/>
            <person name="Takemoto M."/>
            <person name="Kawakami B."/>
            <person name="Yamazaki M."/>
            <person name="Watanabe K."/>
            <person name="Kumagai A."/>
            <person name="Itakura S."/>
            <person name="Fukuzumi Y."/>
            <person name="Fujimori Y."/>
            <person name="Komiyama M."/>
            <person name="Tashiro H."/>
            <person name="Tanigami A."/>
            <person name="Fujiwara T."/>
            <person name="Ono T."/>
            <person name="Yamada K."/>
            <person name="Fujii Y."/>
            <person name="Ozaki K."/>
            <person name="Hirao M."/>
            <person name="Ohmori Y."/>
            <person name="Kawabata A."/>
            <person name="Hikiji T."/>
            <person name="Kobatake N."/>
            <person name="Inagaki H."/>
            <person name="Ikema Y."/>
            <person name="Okamoto S."/>
            <person name="Okitani R."/>
            <person name="Kawakami T."/>
            <person name="Noguchi S."/>
            <person name="Itoh T."/>
            <person name="Shigeta K."/>
            <person name="Senba T."/>
            <person name="Matsumura K."/>
            <person name="Nakajima Y."/>
            <person name="Mizuno T."/>
            <person name="Morinaga M."/>
            <person name="Sasaki M."/>
            <person name="Togashi T."/>
            <person name="Oyama M."/>
            <person name="Hata H."/>
            <person name="Watanabe M."/>
            <person name="Komatsu T."/>
            <person name="Mizushima-Sugano J."/>
            <person name="Satoh T."/>
            <person name="Shirai Y."/>
            <person name="Takahashi Y."/>
            <person name="Nakagawa K."/>
            <person name="Okumura K."/>
            <person name="Nagase T."/>
            <person name="Nomura N."/>
            <person name="Kikuchi H."/>
            <person name="Masuho Y."/>
            <person name="Yamashita R."/>
            <person name="Nakai K."/>
            <person name="Yada T."/>
            <person name="Nakamura Y."/>
            <person name="Ohara O."/>
            <person name="Isogai T."/>
            <person name="Sugano S."/>
        </authorList>
    </citation>
    <scope>NUCLEOTIDE SEQUENCE [LARGE SCALE MRNA]</scope>
    <source>
        <tissue>Kidney</tissue>
    </source>
</reference>
<reference key="4">
    <citation type="journal article" date="2004" name="Nature">
        <title>The DNA sequence and analysis of human chromosome 13.</title>
        <authorList>
            <person name="Dunham A."/>
            <person name="Matthews L.H."/>
            <person name="Burton J."/>
            <person name="Ashurst J.L."/>
            <person name="Howe K.L."/>
            <person name="Ashcroft K.J."/>
            <person name="Beare D.M."/>
            <person name="Burford D.C."/>
            <person name="Hunt S.E."/>
            <person name="Griffiths-Jones S."/>
            <person name="Jones M.C."/>
            <person name="Keenan S.J."/>
            <person name="Oliver K."/>
            <person name="Scott C.E."/>
            <person name="Ainscough R."/>
            <person name="Almeida J.P."/>
            <person name="Ambrose K.D."/>
            <person name="Andrews D.T."/>
            <person name="Ashwell R.I.S."/>
            <person name="Babbage A.K."/>
            <person name="Bagguley C.L."/>
            <person name="Bailey J."/>
            <person name="Bannerjee R."/>
            <person name="Barlow K.F."/>
            <person name="Bates K."/>
            <person name="Beasley H."/>
            <person name="Bird C.P."/>
            <person name="Bray-Allen S."/>
            <person name="Brown A.J."/>
            <person name="Brown J.Y."/>
            <person name="Burrill W."/>
            <person name="Carder C."/>
            <person name="Carter N.P."/>
            <person name="Chapman J.C."/>
            <person name="Clamp M.E."/>
            <person name="Clark S.Y."/>
            <person name="Clarke G."/>
            <person name="Clee C.M."/>
            <person name="Clegg S.C."/>
            <person name="Cobley V."/>
            <person name="Collins J.E."/>
            <person name="Corby N."/>
            <person name="Coville G.J."/>
            <person name="Deloukas P."/>
            <person name="Dhami P."/>
            <person name="Dunham I."/>
            <person name="Dunn M."/>
            <person name="Earthrowl M.E."/>
            <person name="Ellington A.G."/>
            <person name="Faulkner L."/>
            <person name="Frankish A.G."/>
            <person name="Frankland J."/>
            <person name="French L."/>
            <person name="Garner P."/>
            <person name="Garnett J."/>
            <person name="Gilbert J.G.R."/>
            <person name="Gilson C.J."/>
            <person name="Ghori J."/>
            <person name="Grafham D.V."/>
            <person name="Gribble S.M."/>
            <person name="Griffiths C."/>
            <person name="Hall R.E."/>
            <person name="Hammond S."/>
            <person name="Harley J.L."/>
            <person name="Hart E.A."/>
            <person name="Heath P.D."/>
            <person name="Howden P.J."/>
            <person name="Huckle E.J."/>
            <person name="Hunt P.J."/>
            <person name="Hunt A.R."/>
            <person name="Johnson C."/>
            <person name="Johnson D."/>
            <person name="Kay M."/>
            <person name="Kimberley A.M."/>
            <person name="King A."/>
            <person name="Laird G.K."/>
            <person name="Langford C.J."/>
            <person name="Lawlor S."/>
            <person name="Leongamornlert D.A."/>
            <person name="Lloyd D.M."/>
            <person name="Lloyd C."/>
            <person name="Loveland J.E."/>
            <person name="Lovell J."/>
            <person name="Martin S."/>
            <person name="Mashreghi-Mohammadi M."/>
            <person name="McLaren S.J."/>
            <person name="McMurray A."/>
            <person name="Milne S."/>
            <person name="Moore M.J.F."/>
            <person name="Nickerson T."/>
            <person name="Palmer S.A."/>
            <person name="Pearce A.V."/>
            <person name="Peck A.I."/>
            <person name="Pelan S."/>
            <person name="Phillimore B."/>
            <person name="Porter K.M."/>
            <person name="Rice C.M."/>
            <person name="Searle S."/>
            <person name="Sehra H.K."/>
            <person name="Shownkeen R."/>
            <person name="Skuce C.D."/>
            <person name="Smith M."/>
            <person name="Steward C.A."/>
            <person name="Sycamore N."/>
            <person name="Tester J."/>
            <person name="Thomas D.W."/>
            <person name="Tracey A."/>
            <person name="Tromans A."/>
            <person name="Tubby B."/>
            <person name="Wall M."/>
            <person name="Wallis J.M."/>
            <person name="West A.P."/>
            <person name="Whitehead S.L."/>
            <person name="Willey D.L."/>
            <person name="Wilming L."/>
            <person name="Wray P.W."/>
            <person name="Wright M.W."/>
            <person name="Young L."/>
            <person name="Coulson A."/>
            <person name="Durbin R.M."/>
            <person name="Hubbard T."/>
            <person name="Sulston J.E."/>
            <person name="Beck S."/>
            <person name="Bentley D.R."/>
            <person name="Rogers J."/>
            <person name="Ross M.T."/>
        </authorList>
    </citation>
    <scope>NUCLEOTIDE SEQUENCE [LARGE SCALE GENOMIC DNA]</scope>
</reference>
<reference key="5">
    <citation type="submission" date="2005-07" db="EMBL/GenBank/DDBJ databases">
        <authorList>
            <person name="Mural R.J."/>
            <person name="Istrail S."/>
            <person name="Sutton G.G."/>
            <person name="Florea L."/>
            <person name="Halpern A.L."/>
            <person name="Mobarry C.M."/>
            <person name="Lippert R."/>
            <person name="Walenz B."/>
            <person name="Shatkay H."/>
            <person name="Dew I."/>
            <person name="Miller J.R."/>
            <person name="Flanigan M.J."/>
            <person name="Edwards N.J."/>
            <person name="Bolanos R."/>
            <person name="Fasulo D."/>
            <person name="Halldorsson B.V."/>
            <person name="Hannenhalli S."/>
            <person name="Turner R."/>
            <person name="Yooseph S."/>
            <person name="Lu F."/>
            <person name="Nusskern D.R."/>
            <person name="Shue B.C."/>
            <person name="Zheng X.H."/>
            <person name="Zhong F."/>
            <person name="Delcher A.L."/>
            <person name="Huson D.H."/>
            <person name="Kravitz S.A."/>
            <person name="Mouchard L."/>
            <person name="Reinert K."/>
            <person name="Remington K.A."/>
            <person name="Clark A.G."/>
            <person name="Waterman M.S."/>
            <person name="Eichler E.E."/>
            <person name="Adams M.D."/>
            <person name="Hunkapiller M.W."/>
            <person name="Myers E.W."/>
            <person name="Venter J.C."/>
        </authorList>
    </citation>
    <scope>NUCLEOTIDE SEQUENCE [LARGE SCALE GENOMIC DNA]</scope>
</reference>
<reference key="6">
    <citation type="journal article" date="2004" name="Genome Res.">
        <title>The status, quality, and expansion of the NIH full-length cDNA project: the Mammalian Gene Collection (MGC).</title>
        <authorList>
            <consortium name="The MGC Project Team"/>
        </authorList>
    </citation>
    <scope>NUCLEOTIDE SEQUENCE [LARGE SCALE MRNA]</scope>
</reference>
<reference key="7">
    <citation type="journal article" date="1993" name="J. Biol. Chem.">
        <title>Novel secretory heparin-binding factors from human glioma cells (glia-activating factors) involved in glial cell growth. Purification and biological properties.</title>
        <authorList>
            <person name="Naruo K."/>
            <person name="Seko C."/>
            <person name="Kuroshima K."/>
            <person name="Matsutani E."/>
            <person name="Sasada R."/>
            <person name="Kondo T."/>
            <person name="Kurokawa T."/>
        </authorList>
    </citation>
    <scope>PROTEIN SEQUENCE OF 4-26 AND 34-54</scope>
    <source>
        <tissue>Glial tumor</tissue>
    </source>
</reference>
<reference key="8">
    <citation type="journal article" date="1996" name="J. Biol. Chem.">
        <title>Receptor specificity of the fibroblast growth factor family.</title>
        <authorList>
            <person name="Ornitz D.M."/>
            <person name="Xu J."/>
            <person name="Colvin J.S."/>
            <person name="McEwen D.G."/>
            <person name="MacArthur C.A."/>
            <person name="Coulier F."/>
            <person name="Gao G."/>
            <person name="Goldfarb M."/>
        </authorList>
    </citation>
    <scope>INTERACTION WITH FGFR2 AND FGFR3</scope>
    <scope>FUNCTION IN CELL PROLIFERATION</scope>
</reference>
<reference key="9">
    <citation type="journal article" date="2006" name="J. Biol. Chem.">
        <title>Receptor specificity of the fibroblast growth factor family. The complete mammalian FGF family.</title>
        <authorList>
            <person name="Zhang X."/>
            <person name="Ibrahimi O.A."/>
            <person name="Olsen S.K."/>
            <person name="Umemori H."/>
            <person name="Mohammadi M."/>
            <person name="Ornitz D.M."/>
        </authorList>
    </citation>
    <scope>INTERACTION WITH FGFR1; FGFR2; FGFR3 AND FGFR4</scope>
    <scope>FUNCTION IN STIMULATION OF CELL PROLIFERATION</scope>
</reference>
<reference key="10">
    <citation type="journal article" date="2010" name="Nat. Rev. Cancer">
        <title>Fibroblast growth factor signalling: from development to cancer.</title>
        <authorList>
            <person name="Turner N."/>
            <person name="Grose R."/>
        </authorList>
    </citation>
    <scope>REVIEW</scope>
</reference>
<reference key="11">
    <citation type="journal article" date="2001" name="Acta Crystallogr. D">
        <title>Structure of fibroblast growth factor 9 shows a symmetric dimer with unique receptor- and heparin-binding interfaces.</title>
        <authorList>
            <person name="Hecht H.J."/>
            <person name="Adar R."/>
            <person name="Hofmann B."/>
            <person name="Bogin O."/>
            <person name="Weich H."/>
            <person name="Yayon A."/>
        </authorList>
    </citation>
    <scope>X-RAY CRYSTALLOGRAPHY (2.6 ANGSTROMS)</scope>
    <scope>SUBUNIT</scope>
    <scope>HEPARIN-BINDING</scope>
</reference>
<reference key="12">
    <citation type="journal article" date="2001" name="J. Biol. Chem.">
        <title>Crystal structure of fibroblast growth factor 9 reveals regions implicated in dimerization and autoinhibition.</title>
        <authorList>
            <person name="Plotnikov A.N."/>
            <person name="Eliseenkova A.V."/>
            <person name="Ibrahimi O.A."/>
            <person name="Shriver Z."/>
            <person name="Sasisekharan R."/>
            <person name="Lemmon M.A."/>
            <person name="Mohammadi M."/>
        </authorList>
    </citation>
    <scope>X-RAY CRYSTALLOGRAPHY (2.2 ANGSTROMS) OF 35-208</scope>
    <scope>SUBUNIT</scope>
</reference>
<reference key="13">
    <citation type="journal article" date="2009" name="Am. J. Hum. Genet.">
        <title>Multiple synostoses syndrome is due to a missense mutation in exon 2 of FGF9 gene.</title>
        <authorList>
            <person name="Wu X.L."/>
            <person name="Gu M.M."/>
            <person name="Huang L."/>
            <person name="Liu X.S."/>
            <person name="Zhang H.X."/>
            <person name="Ding X.Y."/>
            <person name="Xu J.Q."/>
            <person name="Cui B."/>
            <person name="Wang L."/>
            <person name="Lu S.Y."/>
            <person name="Chen X.Y."/>
            <person name="Zhang H.G."/>
            <person name="Huang W."/>
            <person name="Yuan W.T."/>
            <person name="Yang J.M."/>
            <person name="Gu Q."/>
            <person name="Fei J."/>
            <person name="Chen Z."/>
            <person name="Yuan Z.M."/>
            <person name="Wang Z.G."/>
        </authorList>
    </citation>
    <scope>VARIANT SYNS3 ASN-99</scope>
    <scope>CHARACTERIZATION OF VARIANT SYNS3 ASN-99</scope>
</reference>
<sequence length="208" mass="23441">MAPLGEVGNYFGVQDAVPFGNVPVLPVDSPVLLSDHLGQSEAGGLPRGPAVTDLDHLKGILRRRQLYCRTGFHLEIFPNGTIQGTRKDHSRFGILEFISIAVGLVSIRGVDSGLYLGMNEKGELYGSEKLTQECVFREQFEENWYNTYSSNLYKHVDTGRRYYVALNKDGTPREGTRTKRHQKFTHFLPRPVDPDKVPELYKDILSQS</sequence>
<gene>
    <name type="primary">FGF9</name>
</gene>
<name>FGF9_HUMAN</name>